<proteinExistence type="inferred from homology"/>
<gene>
    <name evidence="1" type="primary">fabH2</name>
    <name type="ordered locus">DR_1947</name>
</gene>
<keyword id="KW-0012">Acyltransferase</keyword>
<keyword id="KW-0963">Cytoplasm</keyword>
<keyword id="KW-0275">Fatty acid biosynthesis</keyword>
<keyword id="KW-0276">Fatty acid metabolism</keyword>
<keyword id="KW-0444">Lipid biosynthesis</keyword>
<keyword id="KW-0443">Lipid metabolism</keyword>
<keyword id="KW-0511">Multifunctional enzyme</keyword>
<keyword id="KW-1185">Reference proteome</keyword>
<keyword id="KW-0808">Transferase</keyword>
<feature type="chain" id="PRO_0000110423" description="Beta-ketoacyl-[acyl-carrier-protein] synthase III 2">
    <location>
        <begin position="1"/>
        <end position="338"/>
    </location>
</feature>
<feature type="region of interest" description="ACP-binding" evidence="1">
    <location>
        <begin position="256"/>
        <end position="260"/>
    </location>
</feature>
<feature type="active site" evidence="1">
    <location>
        <position position="119"/>
    </location>
</feature>
<feature type="active site" evidence="1">
    <location>
        <position position="255"/>
    </location>
</feature>
<feature type="active site" evidence="1">
    <location>
        <position position="285"/>
    </location>
</feature>
<sequence>MTASLSAPAIGILAVGAYAPAAVITNAHYATRLDTSDDWITSRTGIRERRHAAPDESSSVLGIRATQDLAGRFPGALDGVNLVICATSSPDAMFPSTAALIAGGTGLRGAAAFDVSVACSGFLYALSVGYGMIRAGLAKKALIVGSEVMSGAVDQNDRNTAILFGDGAGCVVIGEVPQGYGFQSFVLGADSAGGPHLYLRGAALRLPEGTEMGPHLTQNGREVFKFAVRTLGDSAEQAMRQAGKTTADIDWLVPHQANIRIIEAACERFGLPIERAVTNLDRYGNTSAASIPLALAEAQAQGRFKDGDQLLLAGFGGGLSWGAAALKWWSGPTGKQSS</sequence>
<dbReference type="EC" id="2.3.1.180" evidence="1"/>
<dbReference type="EMBL" id="AE000513">
    <property type="protein sequence ID" value="AAF11499.1"/>
    <property type="status" value="ALT_INIT"/>
    <property type="molecule type" value="Genomic_DNA"/>
</dbReference>
<dbReference type="PIR" id="C75334">
    <property type="entry name" value="C75334"/>
</dbReference>
<dbReference type="RefSeq" id="NP_295670.1">
    <property type="nucleotide sequence ID" value="NC_001263.1"/>
</dbReference>
<dbReference type="RefSeq" id="WP_027479820.1">
    <property type="nucleotide sequence ID" value="NC_001263.1"/>
</dbReference>
<dbReference type="SMR" id="Q9RT22"/>
<dbReference type="FunCoup" id="Q9RT22">
    <property type="interactions" value="407"/>
</dbReference>
<dbReference type="STRING" id="243230.DR_1947"/>
<dbReference type="PaxDb" id="243230-DR_1947"/>
<dbReference type="EnsemblBacteria" id="AAF11499">
    <property type="protein sequence ID" value="AAF11499"/>
    <property type="gene ID" value="DR_1947"/>
</dbReference>
<dbReference type="GeneID" id="69518183"/>
<dbReference type="KEGG" id="dra:DR_1947"/>
<dbReference type="PATRIC" id="fig|243230.17.peg.2167"/>
<dbReference type="eggNOG" id="COG0332">
    <property type="taxonomic scope" value="Bacteria"/>
</dbReference>
<dbReference type="HOGENOM" id="CLU_039592_3_1_0"/>
<dbReference type="InParanoid" id="Q9RT22"/>
<dbReference type="OrthoDB" id="9815506at2"/>
<dbReference type="UniPathway" id="UPA00094"/>
<dbReference type="Proteomes" id="UP000002524">
    <property type="component" value="Chromosome 1"/>
</dbReference>
<dbReference type="GO" id="GO:0005737">
    <property type="term" value="C:cytoplasm"/>
    <property type="evidence" value="ECO:0007669"/>
    <property type="project" value="UniProtKB-SubCell"/>
</dbReference>
<dbReference type="GO" id="GO:0004315">
    <property type="term" value="F:3-oxoacyl-[acyl-carrier-protein] synthase activity"/>
    <property type="evidence" value="ECO:0007669"/>
    <property type="project" value="InterPro"/>
</dbReference>
<dbReference type="GO" id="GO:0033818">
    <property type="term" value="F:beta-ketoacyl-acyl-carrier-protein synthase III activity"/>
    <property type="evidence" value="ECO:0007669"/>
    <property type="project" value="UniProtKB-UniRule"/>
</dbReference>
<dbReference type="GO" id="GO:0006633">
    <property type="term" value="P:fatty acid biosynthetic process"/>
    <property type="evidence" value="ECO:0007669"/>
    <property type="project" value="UniProtKB-UniRule"/>
</dbReference>
<dbReference type="GO" id="GO:0044550">
    <property type="term" value="P:secondary metabolite biosynthetic process"/>
    <property type="evidence" value="ECO:0000318"/>
    <property type="project" value="GO_Central"/>
</dbReference>
<dbReference type="CDD" id="cd00830">
    <property type="entry name" value="KAS_III"/>
    <property type="match status" value="1"/>
</dbReference>
<dbReference type="FunFam" id="3.40.47.10:FF:000004">
    <property type="entry name" value="3-oxoacyl-[acyl-carrier-protein] synthase 3"/>
    <property type="match status" value="1"/>
</dbReference>
<dbReference type="Gene3D" id="3.40.47.10">
    <property type="match status" value="1"/>
</dbReference>
<dbReference type="HAMAP" id="MF_01815">
    <property type="entry name" value="FabH"/>
    <property type="match status" value="1"/>
</dbReference>
<dbReference type="InterPro" id="IPR013747">
    <property type="entry name" value="ACP_syn_III_C"/>
</dbReference>
<dbReference type="InterPro" id="IPR013751">
    <property type="entry name" value="ACP_syn_III_N"/>
</dbReference>
<dbReference type="InterPro" id="IPR004655">
    <property type="entry name" value="FabH"/>
</dbReference>
<dbReference type="InterPro" id="IPR016039">
    <property type="entry name" value="Thiolase-like"/>
</dbReference>
<dbReference type="NCBIfam" id="TIGR00747">
    <property type="entry name" value="fabH"/>
    <property type="match status" value="1"/>
</dbReference>
<dbReference type="NCBIfam" id="NF006829">
    <property type="entry name" value="PRK09352.1"/>
    <property type="match status" value="1"/>
</dbReference>
<dbReference type="PANTHER" id="PTHR34069">
    <property type="entry name" value="3-OXOACYL-[ACYL-CARRIER-PROTEIN] SYNTHASE 3"/>
    <property type="match status" value="1"/>
</dbReference>
<dbReference type="PANTHER" id="PTHR34069:SF2">
    <property type="entry name" value="BETA-KETOACYL-[ACYL-CARRIER-PROTEIN] SYNTHASE III"/>
    <property type="match status" value="1"/>
</dbReference>
<dbReference type="Pfam" id="PF08545">
    <property type="entry name" value="ACP_syn_III"/>
    <property type="match status" value="1"/>
</dbReference>
<dbReference type="Pfam" id="PF08541">
    <property type="entry name" value="ACP_syn_III_C"/>
    <property type="match status" value="1"/>
</dbReference>
<dbReference type="SUPFAM" id="SSF53901">
    <property type="entry name" value="Thiolase-like"/>
    <property type="match status" value="1"/>
</dbReference>
<reference key="1">
    <citation type="journal article" date="1999" name="Science">
        <title>Genome sequence of the radioresistant bacterium Deinococcus radiodurans R1.</title>
        <authorList>
            <person name="White O."/>
            <person name="Eisen J.A."/>
            <person name="Heidelberg J.F."/>
            <person name="Hickey E.K."/>
            <person name="Peterson J.D."/>
            <person name="Dodson R.J."/>
            <person name="Haft D.H."/>
            <person name="Gwinn M.L."/>
            <person name="Nelson W.C."/>
            <person name="Richardson D.L."/>
            <person name="Moffat K.S."/>
            <person name="Qin H."/>
            <person name="Jiang L."/>
            <person name="Pamphile W."/>
            <person name="Crosby M."/>
            <person name="Shen M."/>
            <person name="Vamathevan J.J."/>
            <person name="Lam P."/>
            <person name="McDonald L.A."/>
            <person name="Utterback T.R."/>
            <person name="Zalewski C."/>
            <person name="Makarova K.S."/>
            <person name="Aravind L."/>
            <person name="Daly M.J."/>
            <person name="Minton K.W."/>
            <person name="Fleischmann R.D."/>
            <person name="Ketchum K.A."/>
            <person name="Nelson K.E."/>
            <person name="Salzberg S.L."/>
            <person name="Smith H.O."/>
            <person name="Venter J.C."/>
            <person name="Fraser C.M."/>
        </authorList>
    </citation>
    <scope>NUCLEOTIDE SEQUENCE [LARGE SCALE GENOMIC DNA]</scope>
    <source>
        <strain>ATCC 13939 / DSM 20539 / JCM 16871 / CCUG 27074 / LMG 4051 / NBRC 15346 / NCIMB 9279 / VKM B-1422 / R1</strain>
    </source>
</reference>
<protein>
    <recommendedName>
        <fullName evidence="1">Beta-ketoacyl-[acyl-carrier-protein] synthase III 2</fullName>
        <shortName evidence="1">Beta-ketoacyl-ACP synthase III 2</shortName>
        <shortName evidence="1">KAS III 2</shortName>
        <ecNumber evidence="1">2.3.1.180</ecNumber>
    </recommendedName>
    <alternativeName>
        <fullName evidence="1">3-oxoacyl-[acyl-carrier-protein] synthase 3 2</fullName>
    </alternativeName>
    <alternativeName>
        <fullName evidence="1">3-oxoacyl-[acyl-carrier-protein] synthase III 2</fullName>
    </alternativeName>
</protein>
<comment type="function">
    <text evidence="1">Catalyzes the condensation reaction of fatty acid synthesis by the addition to an acyl acceptor of two carbons from malonyl-ACP. Catalyzes the first condensation reaction which initiates fatty acid synthesis and may therefore play a role in governing the total rate of fatty acid production. Possesses both acetoacetyl-ACP synthase and acetyl transacylase activities. Its substrate specificity determines the biosynthesis of branched-chain and/or straight-chain of fatty acids.</text>
</comment>
<comment type="catalytic activity">
    <reaction evidence="1">
        <text>malonyl-[ACP] + acetyl-CoA + H(+) = 3-oxobutanoyl-[ACP] + CO2 + CoA</text>
        <dbReference type="Rhea" id="RHEA:12080"/>
        <dbReference type="Rhea" id="RHEA-COMP:9623"/>
        <dbReference type="Rhea" id="RHEA-COMP:9625"/>
        <dbReference type="ChEBI" id="CHEBI:15378"/>
        <dbReference type="ChEBI" id="CHEBI:16526"/>
        <dbReference type="ChEBI" id="CHEBI:57287"/>
        <dbReference type="ChEBI" id="CHEBI:57288"/>
        <dbReference type="ChEBI" id="CHEBI:78449"/>
        <dbReference type="ChEBI" id="CHEBI:78450"/>
        <dbReference type="EC" id="2.3.1.180"/>
    </reaction>
</comment>
<comment type="pathway">
    <text evidence="1">Lipid metabolism; fatty acid biosynthesis.</text>
</comment>
<comment type="subunit">
    <text evidence="1">Homodimer.</text>
</comment>
<comment type="subcellular location">
    <subcellularLocation>
        <location evidence="1">Cytoplasm</location>
    </subcellularLocation>
</comment>
<comment type="domain">
    <text evidence="1">The last Arg residue of the ACP-binding site is essential for the weak association between ACP/AcpP and FabH.</text>
</comment>
<comment type="similarity">
    <text evidence="1">Belongs to the thiolase-like superfamily. FabH family.</text>
</comment>
<comment type="sequence caution" evidence="2">
    <conflict type="erroneous initiation">
        <sequence resource="EMBL-CDS" id="AAF11499"/>
    </conflict>
</comment>
<accession>Q9RT22</accession>
<evidence type="ECO:0000255" key="1">
    <source>
        <dbReference type="HAMAP-Rule" id="MF_01815"/>
    </source>
</evidence>
<evidence type="ECO:0000305" key="2"/>
<organism>
    <name type="scientific">Deinococcus radiodurans (strain ATCC 13939 / DSM 20539 / JCM 16871 / CCUG 27074 / LMG 4051 / NBRC 15346 / NCIMB 9279 / VKM B-1422 / R1)</name>
    <dbReference type="NCBI Taxonomy" id="243230"/>
    <lineage>
        <taxon>Bacteria</taxon>
        <taxon>Thermotogati</taxon>
        <taxon>Deinococcota</taxon>
        <taxon>Deinococci</taxon>
        <taxon>Deinococcales</taxon>
        <taxon>Deinococcaceae</taxon>
        <taxon>Deinococcus</taxon>
    </lineage>
</organism>
<name>FABH2_DEIRA</name>